<keyword id="KW-0963">Cytoplasm</keyword>
<keyword id="KW-0448">Lipopolysaccharide biosynthesis</keyword>
<keyword id="KW-0548">Nucleotidyltransferase</keyword>
<keyword id="KW-1185">Reference proteome</keyword>
<keyword id="KW-0808">Transferase</keyword>
<sequence length="251" mass="28388">MKITAIIPARYASTRFEGKALADIMGKPMVQHVYERTAKASLVSEVIVATDDERIAAAVHAFGGRAEMTSRVHETGTDRLAEVAARLDSDIIVNVQGDEPLIEPAMIDEAIKPLAEDSSVMMGTLKTRIKTLHDFLSPNVVKVVTDWEGYALYFSRSPLPNFRDKWNDLKDEAFASRKLLCYKHVGLYVYRRDFLLQFAQMSPTYLEMAEKLEQLRVLENGYRIKVVETDYESIGVDTPGDLEKVLERLKK</sequence>
<reference key="1">
    <citation type="submission" date="2007-05" db="EMBL/GenBank/DDBJ databases">
        <title>Complete sequence of Geobacter uraniireducens Rf4.</title>
        <authorList>
            <consortium name="US DOE Joint Genome Institute"/>
            <person name="Copeland A."/>
            <person name="Lucas S."/>
            <person name="Lapidus A."/>
            <person name="Barry K."/>
            <person name="Detter J.C."/>
            <person name="Glavina del Rio T."/>
            <person name="Hammon N."/>
            <person name="Israni S."/>
            <person name="Dalin E."/>
            <person name="Tice H."/>
            <person name="Pitluck S."/>
            <person name="Chertkov O."/>
            <person name="Brettin T."/>
            <person name="Bruce D."/>
            <person name="Han C."/>
            <person name="Schmutz J."/>
            <person name="Larimer F."/>
            <person name="Land M."/>
            <person name="Hauser L."/>
            <person name="Kyrpides N."/>
            <person name="Mikhailova N."/>
            <person name="Shelobolina E."/>
            <person name="Aklujkar M."/>
            <person name="Lovley D."/>
            <person name="Richardson P."/>
        </authorList>
    </citation>
    <scope>NUCLEOTIDE SEQUENCE [LARGE SCALE GENOMIC DNA]</scope>
    <source>
        <strain>ATCC BAA-1134 / JCM 13001 / Rf4</strain>
    </source>
</reference>
<organism>
    <name type="scientific">Geotalea uraniireducens (strain Rf4)</name>
    <name type="common">Geobacter uraniireducens</name>
    <dbReference type="NCBI Taxonomy" id="351605"/>
    <lineage>
        <taxon>Bacteria</taxon>
        <taxon>Pseudomonadati</taxon>
        <taxon>Thermodesulfobacteriota</taxon>
        <taxon>Desulfuromonadia</taxon>
        <taxon>Geobacterales</taxon>
        <taxon>Geobacteraceae</taxon>
        <taxon>Geotalea</taxon>
    </lineage>
</organism>
<proteinExistence type="inferred from homology"/>
<evidence type="ECO:0000255" key="1">
    <source>
        <dbReference type="HAMAP-Rule" id="MF_00057"/>
    </source>
</evidence>
<gene>
    <name evidence="1" type="primary">kdsB</name>
    <name type="ordered locus">Gura_2980</name>
</gene>
<protein>
    <recommendedName>
        <fullName evidence="1">3-deoxy-manno-octulosonate cytidylyltransferase</fullName>
        <ecNumber evidence="1">2.7.7.38</ecNumber>
    </recommendedName>
    <alternativeName>
        <fullName evidence="1">CMP-2-keto-3-deoxyoctulosonic acid synthase</fullName>
        <shortName evidence="1">CKS</shortName>
        <shortName evidence="1">CMP-KDO synthase</shortName>
    </alternativeName>
</protein>
<accession>A5G5T4</accession>
<comment type="function">
    <text evidence="1">Activates KDO (a required 8-carbon sugar) for incorporation into bacterial lipopolysaccharide in Gram-negative bacteria.</text>
</comment>
<comment type="catalytic activity">
    <reaction evidence="1">
        <text>3-deoxy-alpha-D-manno-oct-2-ulosonate + CTP = CMP-3-deoxy-beta-D-manno-octulosonate + diphosphate</text>
        <dbReference type="Rhea" id="RHEA:23448"/>
        <dbReference type="ChEBI" id="CHEBI:33019"/>
        <dbReference type="ChEBI" id="CHEBI:37563"/>
        <dbReference type="ChEBI" id="CHEBI:85986"/>
        <dbReference type="ChEBI" id="CHEBI:85987"/>
        <dbReference type="EC" id="2.7.7.38"/>
    </reaction>
</comment>
<comment type="pathway">
    <text evidence="1">Nucleotide-sugar biosynthesis; CMP-3-deoxy-D-manno-octulosonate biosynthesis; CMP-3-deoxy-D-manno-octulosonate from 3-deoxy-D-manno-octulosonate and CTP: step 1/1.</text>
</comment>
<comment type="pathway">
    <text evidence="1">Bacterial outer membrane biogenesis; lipopolysaccharide biosynthesis.</text>
</comment>
<comment type="subcellular location">
    <subcellularLocation>
        <location evidence="1">Cytoplasm</location>
    </subcellularLocation>
</comment>
<comment type="similarity">
    <text evidence="1">Belongs to the KdsB family.</text>
</comment>
<feature type="chain" id="PRO_1000074995" description="3-deoxy-manno-octulosonate cytidylyltransferase">
    <location>
        <begin position="1"/>
        <end position="251"/>
    </location>
</feature>
<name>KDSB_GEOUR</name>
<dbReference type="EC" id="2.7.7.38" evidence="1"/>
<dbReference type="EMBL" id="CP000698">
    <property type="protein sequence ID" value="ABQ27152.1"/>
    <property type="molecule type" value="Genomic_DNA"/>
</dbReference>
<dbReference type="RefSeq" id="WP_011939821.1">
    <property type="nucleotide sequence ID" value="NC_009483.1"/>
</dbReference>
<dbReference type="SMR" id="A5G5T4"/>
<dbReference type="STRING" id="351605.Gura_2980"/>
<dbReference type="KEGG" id="gur:Gura_2980"/>
<dbReference type="HOGENOM" id="CLU_065038_0_1_7"/>
<dbReference type="OrthoDB" id="9815559at2"/>
<dbReference type="UniPathway" id="UPA00030"/>
<dbReference type="UniPathway" id="UPA00358">
    <property type="reaction ID" value="UER00476"/>
</dbReference>
<dbReference type="Proteomes" id="UP000006695">
    <property type="component" value="Chromosome"/>
</dbReference>
<dbReference type="GO" id="GO:0005829">
    <property type="term" value="C:cytosol"/>
    <property type="evidence" value="ECO:0007669"/>
    <property type="project" value="TreeGrafter"/>
</dbReference>
<dbReference type="GO" id="GO:0008690">
    <property type="term" value="F:3-deoxy-manno-octulosonate cytidylyltransferase activity"/>
    <property type="evidence" value="ECO:0007669"/>
    <property type="project" value="UniProtKB-UniRule"/>
</dbReference>
<dbReference type="GO" id="GO:0033468">
    <property type="term" value="P:CMP-keto-3-deoxy-D-manno-octulosonic acid biosynthetic process"/>
    <property type="evidence" value="ECO:0007669"/>
    <property type="project" value="UniProtKB-UniRule"/>
</dbReference>
<dbReference type="GO" id="GO:0009103">
    <property type="term" value="P:lipopolysaccharide biosynthetic process"/>
    <property type="evidence" value="ECO:0007669"/>
    <property type="project" value="UniProtKB-UniRule"/>
</dbReference>
<dbReference type="CDD" id="cd02517">
    <property type="entry name" value="CMP-KDO-Synthetase"/>
    <property type="match status" value="1"/>
</dbReference>
<dbReference type="FunFam" id="3.90.550.10:FF:000011">
    <property type="entry name" value="3-deoxy-manno-octulosonate cytidylyltransferase"/>
    <property type="match status" value="1"/>
</dbReference>
<dbReference type="Gene3D" id="3.90.550.10">
    <property type="entry name" value="Spore Coat Polysaccharide Biosynthesis Protein SpsA, Chain A"/>
    <property type="match status" value="1"/>
</dbReference>
<dbReference type="HAMAP" id="MF_00057">
    <property type="entry name" value="KdsB"/>
    <property type="match status" value="1"/>
</dbReference>
<dbReference type="InterPro" id="IPR003329">
    <property type="entry name" value="Cytidylyl_trans"/>
</dbReference>
<dbReference type="InterPro" id="IPR004528">
    <property type="entry name" value="KdsB"/>
</dbReference>
<dbReference type="InterPro" id="IPR029044">
    <property type="entry name" value="Nucleotide-diphossugar_trans"/>
</dbReference>
<dbReference type="NCBIfam" id="TIGR00466">
    <property type="entry name" value="kdsB"/>
    <property type="match status" value="1"/>
</dbReference>
<dbReference type="NCBIfam" id="NF003950">
    <property type="entry name" value="PRK05450.1-3"/>
    <property type="match status" value="1"/>
</dbReference>
<dbReference type="NCBIfam" id="NF003952">
    <property type="entry name" value="PRK05450.1-5"/>
    <property type="match status" value="1"/>
</dbReference>
<dbReference type="NCBIfam" id="NF009905">
    <property type="entry name" value="PRK13368.1"/>
    <property type="match status" value="1"/>
</dbReference>
<dbReference type="PANTHER" id="PTHR42866">
    <property type="entry name" value="3-DEOXY-MANNO-OCTULOSONATE CYTIDYLYLTRANSFERASE"/>
    <property type="match status" value="1"/>
</dbReference>
<dbReference type="PANTHER" id="PTHR42866:SF2">
    <property type="entry name" value="3-DEOXY-MANNO-OCTULOSONATE CYTIDYLYLTRANSFERASE, MITOCHONDRIAL"/>
    <property type="match status" value="1"/>
</dbReference>
<dbReference type="Pfam" id="PF02348">
    <property type="entry name" value="CTP_transf_3"/>
    <property type="match status" value="1"/>
</dbReference>
<dbReference type="SUPFAM" id="SSF53448">
    <property type="entry name" value="Nucleotide-diphospho-sugar transferases"/>
    <property type="match status" value="1"/>
</dbReference>